<sequence length="508" mass="54752">MAMRTPEELSNLIKDLIEQYTPEVKMVDFGIVFQVGDGIARIYGLEKAMSGELLEFEDGTLGIALNLEANNVGAVLLGDGLKITEGSRVRCTGKIAEIPVGEAYLGRVVDGLARPVDGKGAVQTKDSRAIESPAPGIVARRSVYEPLATGLVAVDAMIPVGRGQRELIIGDRQTGKTAIAVDTILNQKGKGVICVYVAIGQKASSVAQVLNTLKERGALDYTIIVMANANEPATLQYLAPYTGATLAEYFMYTGRPTLTIYDDLSKQAQAYREMSLLLRRPPGREAYPGDVFYLHSRLLERAAKLNNALGEGSMTALPIVETQEGDVSAYIPTNVISITDGQIFLAAGLFNSGLRPAINVGISVSRVGSAAQPKAMKQVAGKLKLELAQFAELEAFSQFASDLDQATQNQLARGARLREILKQPQSSPLSVEEQVASLYAGTNGYLDKLEVSQVRAYLSGLRSYLANSYPKYGEILRSTLTFTPEAEGLVKQAINEYLEEFKSQAKAA</sequence>
<keyword id="KW-0066">ATP synthesis</keyword>
<keyword id="KW-0067">ATP-binding</keyword>
<keyword id="KW-0139">CF(1)</keyword>
<keyword id="KW-0150">Chloroplast</keyword>
<keyword id="KW-0903">Direct protein sequencing</keyword>
<keyword id="KW-0375">Hydrogen ion transport</keyword>
<keyword id="KW-0406">Ion transport</keyword>
<keyword id="KW-0472">Membrane</keyword>
<keyword id="KW-0547">Nucleotide-binding</keyword>
<keyword id="KW-0934">Plastid</keyword>
<keyword id="KW-1185">Reference proteome</keyword>
<keyword id="KW-0793">Thylakoid</keyword>
<keyword id="KW-1278">Translocase</keyword>
<keyword id="KW-0813">Transport</keyword>
<name>ATPA_CHLRE</name>
<comment type="function">
    <text evidence="2">F(1)F(0) ATP synthase produces ATP from ADP in the presence of a proton or sodium gradient. F-type ATPases consist of two structural domains, F(1) containing the extramembraneous catalytic core and F(0) containing the membrane proton channel, linked together by a central stalk and a peripheral stalk. During catalysis, ATP synthesis in the catalytic domain of F(1) is coupled via a rotary mechanism of the central stalk subunits to proton translocation.</text>
</comment>
<comment type="function">
    <text>The alpha chain is a regulatory subunit.</text>
</comment>
<comment type="catalytic activity">
    <reaction evidence="1 2">
        <text>ATP + H2O + 4 H(+)(in) = ADP + phosphate + 5 H(+)(out)</text>
        <dbReference type="Rhea" id="RHEA:57720"/>
        <dbReference type="ChEBI" id="CHEBI:15377"/>
        <dbReference type="ChEBI" id="CHEBI:15378"/>
        <dbReference type="ChEBI" id="CHEBI:30616"/>
        <dbReference type="ChEBI" id="CHEBI:43474"/>
        <dbReference type="ChEBI" id="CHEBI:456216"/>
        <dbReference type="EC" id="7.1.2.2"/>
    </reaction>
</comment>
<comment type="subunit">
    <text evidence="2">F-type ATPases have 2 components, F(1) - the catalytic core - and F(0) - the membrane proton channel. F(1) has five subunits: alpha(3), beta(3), gamma(1), delta(1), epsilon(1). F(0) has four main subunits: a(1), b(1), b'(1) and c(10-14). The alpha and beta chains form an alternating ring which encloses part of the gamma chain. F(1) is attached to F(0) by a central stalk formed by the gamma and epsilon chains, while a peripheral stalk is formed by the delta, b and b' chains.</text>
</comment>
<comment type="subcellular location">
    <subcellularLocation>
        <location evidence="1 2">Plastid</location>
        <location evidence="1 2">Chloroplast thylakoid membrane</location>
        <topology evidence="1">Peripheral membrane protein</topology>
    </subcellularLocation>
</comment>
<comment type="miscellaneous">
    <text evidence="4">In plastids the F-type ATPase is also known as CF(1)CF(0).</text>
</comment>
<comment type="similarity">
    <text evidence="1">Belongs to the ATPase alpha/beta chains family.</text>
</comment>
<organism>
    <name type="scientific">Chlamydomonas reinhardtii</name>
    <name type="common">Chlamydomonas smithii</name>
    <dbReference type="NCBI Taxonomy" id="3055"/>
    <lineage>
        <taxon>Eukaryota</taxon>
        <taxon>Viridiplantae</taxon>
        <taxon>Chlorophyta</taxon>
        <taxon>core chlorophytes</taxon>
        <taxon>Chlorophyceae</taxon>
        <taxon>CS clade</taxon>
        <taxon>Chlamydomonadales</taxon>
        <taxon>Chlamydomonadaceae</taxon>
        <taxon>Chlamydomonas</taxon>
    </lineage>
</organism>
<geneLocation type="chloroplast"/>
<feature type="initiator methionine" description="Removed" evidence="2">
    <location>
        <position position="1"/>
    </location>
</feature>
<feature type="chain" id="PRO_0000144372" description="ATP synthase subunit alpha, chloroplastic">
    <location>
        <begin position="2"/>
        <end position="508"/>
    </location>
</feature>
<feature type="binding site" evidence="1">
    <location>
        <begin position="170"/>
        <end position="177"/>
    </location>
    <ligand>
        <name>ATP</name>
        <dbReference type="ChEBI" id="CHEBI:30616"/>
    </ligand>
</feature>
<feature type="site" description="Required for activity" evidence="1">
    <location>
        <position position="363"/>
    </location>
</feature>
<feature type="sequence variant" description="In strain: CC-503.">
    <original>L</original>
    <variation>I</variation>
    <location>
        <position position="438"/>
    </location>
</feature>
<gene>
    <name evidence="1 3" type="primary">atpA</name>
</gene>
<reference key="1">
    <citation type="journal article" date="2009" name="BMC Evol. Biol.">
        <title>Nucleotide diversity of the Chlamydomonas reinhardtii plastid genome: addressing the mutational-hazard hypothesis.</title>
        <authorList>
            <person name="Smith D.R."/>
            <person name="Lee R.W."/>
        </authorList>
    </citation>
    <scope>NUCLEOTIDE SEQUENCE [LARGE SCALE GENOMIC DNA]</scope>
    <source>
        <strain>CC-503</strain>
    </source>
</reference>
<reference key="2">
    <citation type="journal article" date="1982" name="J. Mol. Biol.">
        <title>Sequence of the chloroplast DNA region of Chlamydomonas reinhardii containing the gene of the large subunit of ribulose bisphosphate carboxylase and parts of its flanking genes.</title>
        <authorList>
            <person name="Dron M."/>
            <person name="Rahire M."/>
            <person name="Rochaix J.-D."/>
        </authorList>
    </citation>
    <scope>NUCLEOTIDE SEQUENCE [GENOMIC DNA] OF 1-112</scope>
</reference>
<reference key="3">
    <citation type="journal article" date="1992" name="Plant Mol. Biol.">
        <title>Complete DNA sequence of the Chlamydomonas reinhardtii chloroplast atpA gene.</title>
        <authorList>
            <person name="Leu S."/>
            <person name="Schlesinger J."/>
            <person name="Michaels A."/>
            <person name="Shavit N."/>
        </authorList>
    </citation>
    <scope>NUCLEOTIDE SEQUENCE [GENOMIC DNA] OF 55-508</scope>
    <source>
        <strain>137c / CC-125</strain>
    </source>
</reference>
<reference key="4">
    <citation type="journal article" date="1995" name="FEBS Lett.">
        <title>Isolation of CF0CF1 from Chlamydomonas reinhardtii cw15 and the N-terminal amino acid sequences of the CF0CF1 subunits.</title>
        <authorList>
            <person name="Fiedler H.R."/>
            <person name="Schmid R."/>
            <person name="Leu S."/>
            <person name="Shavit N."/>
            <person name="Strotmann H."/>
        </authorList>
    </citation>
    <scope>PROTEIN SEQUENCE OF 2-13</scope>
    <scope>FUNCTION</scope>
    <scope>CATALYTIC ACTIVITY</scope>
    <scope>SUBUNIT</scope>
    <scope>SUBCELLULAR LOCATION</scope>
    <source>
        <strain>cw15</strain>
    </source>
</reference>
<reference key="5">
    <citation type="journal article" date="2002" name="Plant Cell">
        <title>The Chlamydomonas reinhardtii plastid chromosome: islands of genes in a sea of repeats.</title>
        <authorList>
            <person name="Maul J.E."/>
            <person name="Lilly J.W."/>
            <person name="Cui L."/>
            <person name="dePamphilis C.W."/>
            <person name="Miller W."/>
            <person name="Harris E.H."/>
            <person name="Stern D.B."/>
        </authorList>
    </citation>
    <scope>IDENTIFICATION</scope>
    <scope>COMPLETE PLASTID GENOME</scope>
</reference>
<dbReference type="EC" id="7.1.2.2" evidence="1 2"/>
<dbReference type="EMBL" id="FJ423446">
    <property type="protein sequence ID" value="ACJ50157.1"/>
    <property type="molecule type" value="Genomic_DNA"/>
</dbReference>
<dbReference type="EMBL" id="J01399">
    <property type="status" value="NOT_ANNOTATED_CDS"/>
    <property type="molecule type" value="Genomic_DNA"/>
</dbReference>
<dbReference type="EMBL" id="X60298">
    <property type="protein sequence ID" value="CAA42840.1"/>
    <property type="molecule type" value="Genomic_DNA"/>
</dbReference>
<dbReference type="EMBL" id="BK000554">
    <property type="protein sequence ID" value="DAA00951.1"/>
    <property type="molecule type" value="Genomic_DNA"/>
</dbReference>
<dbReference type="PIR" id="A05002">
    <property type="entry name" value="PWKMA"/>
</dbReference>
<dbReference type="RefSeq" id="NP_958406.1">
    <property type="nucleotide sequence ID" value="NC_005353.1"/>
</dbReference>
<dbReference type="SMR" id="P26526"/>
<dbReference type="FunCoup" id="P26526">
    <property type="interactions" value="212"/>
</dbReference>
<dbReference type="STRING" id="3055.P26526"/>
<dbReference type="PaxDb" id="3055-DAA00951"/>
<dbReference type="ProMEX" id="P26526"/>
<dbReference type="GeneID" id="2717041"/>
<dbReference type="KEGG" id="cre:ChreCp050"/>
<dbReference type="eggNOG" id="KOG1353">
    <property type="taxonomic scope" value="Eukaryota"/>
</dbReference>
<dbReference type="HOGENOM" id="CLU_010091_2_1_1"/>
<dbReference type="InParanoid" id="P26526"/>
<dbReference type="BioCyc" id="CHLAMY:CHRECP050-MONOMER"/>
<dbReference type="Proteomes" id="UP000006906">
    <property type="component" value="Chloroplast"/>
</dbReference>
<dbReference type="GO" id="GO:0009535">
    <property type="term" value="C:chloroplast thylakoid membrane"/>
    <property type="evidence" value="ECO:0007669"/>
    <property type="project" value="UniProtKB-SubCell"/>
</dbReference>
<dbReference type="GO" id="GO:0045259">
    <property type="term" value="C:proton-transporting ATP synthase complex"/>
    <property type="evidence" value="ECO:0007669"/>
    <property type="project" value="UniProtKB-KW"/>
</dbReference>
<dbReference type="GO" id="GO:0043531">
    <property type="term" value="F:ADP binding"/>
    <property type="evidence" value="ECO:0000318"/>
    <property type="project" value="GO_Central"/>
</dbReference>
<dbReference type="GO" id="GO:0005524">
    <property type="term" value="F:ATP binding"/>
    <property type="evidence" value="ECO:0000318"/>
    <property type="project" value="GO_Central"/>
</dbReference>
<dbReference type="GO" id="GO:0046933">
    <property type="term" value="F:proton-transporting ATP synthase activity, rotational mechanism"/>
    <property type="evidence" value="ECO:0007669"/>
    <property type="project" value="UniProtKB-UniRule"/>
</dbReference>
<dbReference type="GO" id="GO:0015986">
    <property type="term" value="P:proton motive force-driven ATP synthesis"/>
    <property type="evidence" value="ECO:0000318"/>
    <property type="project" value="GO_Central"/>
</dbReference>
<dbReference type="CDD" id="cd18113">
    <property type="entry name" value="ATP-synt_F1_alpha_C"/>
    <property type="match status" value="1"/>
</dbReference>
<dbReference type="CDD" id="cd18116">
    <property type="entry name" value="ATP-synt_F1_alpha_N"/>
    <property type="match status" value="1"/>
</dbReference>
<dbReference type="CDD" id="cd01132">
    <property type="entry name" value="F1-ATPase_alpha_CD"/>
    <property type="match status" value="1"/>
</dbReference>
<dbReference type="FunFam" id="1.20.150.20:FF:000001">
    <property type="entry name" value="ATP synthase subunit alpha"/>
    <property type="match status" value="1"/>
</dbReference>
<dbReference type="FunFam" id="2.40.30.20:FF:000001">
    <property type="entry name" value="ATP synthase subunit alpha"/>
    <property type="match status" value="1"/>
</dbReference>
<dbReference type="FunFam" id="3.40.50.300:FF:000002">
    <property type="entry name" value="ATP synthase subunit alpha"/>
    <property type="match status" value="1"/>
</dbReference>
<dbReference type="Gene3D" id="2.40.30.20">
    <property type="match status" value="1"/>
</dbReference>
<dbReference type="Gene3D" id="1.20.150.20">
    <property type="entry name" value="ATP synthase alpha/beta chain, C-terminal domain"/>
    <property type="match status" value="1"/>
</dbReference>
<dbReference type="Gene3D" id="3.40.50.300">
    <property type="entry name" value="P-loop containing nucleotide triphosphate hydrolases"/>
    <property type="match status" value="1"/>
</dbReference>
<dbReference type="HAMAP" id="MF_01346">
    <property type="entry name" value="ATP_synth_alpha_bact"/>
    <property type="match status" value="1"/>
</dbReference>
<dbReference type="InterPro" id="IPR023366">
    <property type="entry name" value="ATP_synth_asu-like_sf"/>
</dbReference>
<dbReference type="InterPro" id="IPR000793">
    <property type="entry name" value="ATP_synth_asu_C"/>
</dbReference>
<dbReference type="InterPro" id="IPR038376">
    <property type="entry name" value="ATP_synth_asu_C_sf"/>
</dbReference>
<dbReference type="InterPro" id="IPR033732">
    <property type="entry name" value="ATP_synth_F1_a_nt-bd_dom"/>
</dbReference>
<dbReference type="InterPro" id="IPR005294">
    <property type="entry name" value="ATP_synth_F1_asu"/>
</dbReference>
<dbReference type="InterPro" id="IPR020003">
    <property type="entry name" value="ATPase_a/bsu_AS"/>
</dbReference>
<dbReference type="InterPro" id="IPR004100">
    <property type="entry name" value="ATPase_F1/V1/A1_a/bsu_N"/>
</dbReference>
<dbReference type="InterPro" id="IPR036121">
    <property type="entry name" value="ATPase_F1/V1/A1_a/bsu_N_sf"/>
</dbReference>
<dbReference type="InterPro" id="IPR000194">
    <property type="entry name" value="ATPase_F1/V1/A1_a/bsu_nucl-bd"/>
</dbReference>
<dbReference type="InterPro" id="IPR027417">
    <property type="entry name" value="P-loop_NTPase"/>
</dbReference>
<dbReference type="NCBIfam" id="TIGR00962">
    <property type="entry name" value="atpA"/>
    <property type="match status" value="1"/>
</dbReference>
<dbReference type="NCBIfam" id="NF009884">
    <property type="entry name" value="PRK13343.1"/>
    <property type="match status" value="1"/>
</dbReference>
<dbReference type="PANTHER" id="PTHR48082">
    <property type="entry name" value="ATP SYNTHASE SUBUNIT ALPHA, MITOCHONDRIAL"/>
    <property type="match status" value="1"/>
</dbReference>
<dbReference type="PANTHER" id="PTHR48082:SF2">
    <property type="entry name" value="ATP SYNTHASE SUBUNIT ALPHA, MITOCHONDRIAL"/>
    <property type="match status" value="1"/>
</dbReference>
<dbReference type="Pfam" id="PF00006">
    <property type="entry name" value="ATP-synt_ab"/>
    <property type="match status" value="1"/>
</dbReference>
<dbReference type="Pfam" id="PF00306">
    <property type="entry name" value="ATP-synt_ab_C"/>
    <property type="match status" value="1"/>
</dbReference>
<dbReference type="Pfam" id="PF02874">
    <property type="entry name" value="ATP-synt_ab_N"/>
    <property type="match status" value="1"/>
</dbReference>
<dbReference type="PIRSF" id="PIRSF039088">
    <property type="entry name" value="F_ATPase_subunit_alpha"/>
    <property type="match status" value="1"/>
</dbReference>
<dbReference type="SUPFAM" id="SSF47917">
    <property type="entry name" value="C-terminal domain of alpha and beta subunits of F1 ATP synthase"/>
    <property type="match status" value="1"/>
</dbReference>
<dbReference type="SUPFAM" id="SSF50615">
    <property type="entry name" value="N-terminal domain of alpha and beta subunits of F1 ATP synthase"/>
    <property type="match status" value="1"/>
</dbReference>
<dbReference type="SUPFAM" id="SSF52540">
    <property type="entry name" value="P-loop containing nucleoside triphosphate hydrolases"/>
    <property type="match status" value="1"/>
</dbReference>
<dbReference type="PROSITE" id="PS00152">
    <property type="entry name" value="ATPASE_ALPHA_BETA"/>
    <property type="match status" value="1"/>
</dbReference>
<proteinExistence type="evidence at protein level"/>
<evidence type="ECO:0000255" key="1">
    <source>
        <dbReference type="HAMAP-Rule" id="MF_01346"/>
    </source>
</evidence>
<evidence type="ECO:0000269" key="2">
    <source>
    </source>
</evidence>
<evidence type="ECO:0000303" key="3">
    <source>
    </source>
</evidence>
<evidence type="ECO:0000305" key="4"/>
<protein>
    <recommendedName>
        <fullName evidence="1 3">ATP synthase subunit alpha, chloroplastic</fullName>
        <ecNumber evidence="1 2">7.1.2.2</ecNumber>
    </recommendedName>
    <alternativeName>
        <fullName evidence="1">ATP synthase F1 sector subunit alpha</fullName>
    </alternativeName>
    <alternativeName>
        <fullName evidence="1">F-ATPase subunit alpha</fullName>
    </alternativeName>
</protein>
<accession>P26526</accession>
<accession>B7U1L0</accession>